<organism>
    <name type="scientific">Rhodopseudomonas palustris (strain BisB18)</name>
    <dbReference type="NCBI Taxonomy" id="316056"/>
    <lineage>
        <taxon>Bacteria</taxon>
        <taxon>Pseudomonadati</taxon>
        <taxon>Pseudomonadota</taxon>
        <taxon>Alphaproteobacteria</taxon>
        <taxon>Hyphomicrobiales</taxon>
        <taxon>Nitrobacteraceae</taxon>
        <taxon>Rhodopseudomonas</taxon>
    </lineage>
</organism>
<reference key="1">
    <citation type="submission" date="2006-03" db="EMBL/GenBank/DDBJ databases">
        <title>Complete sequence of Rhodopseudomonas palustris BisB18.</title>
        <authorList>
            <consortium name="US DOE Joint Genome Institute"/>
            <person name="Copeland A."/>
            <person name="Lucas S."/>
            <person name="Lapidus A."/>
            <person name="Barry K."/>
            <person name="Detter J.C."/>
            <person name="Glavina del Rio T."/>
            <person name="Hammon N."/>
            <person name="Israni S."/>
            <person name="Dalin E."/>
            <person name="Tice H."/>
            <person name="Pitluck S."/>
            <person name="Chain P."/>
            <person name="Malfatti S."/>
            <person name="Shin M."/>
            <person name="Vergez L."/>
            <person name="Schmutz J."/>
            <person name="Larimer F."/>
            <person name="Land M."/>
            <person name="Hauser L."/>
            <person name="Pelletier D.A."/>
            <person name="Kyrpides N."/>
            <person name="Anderson I."/>
            <person name="Oda Y."/>
            <person name="Harwood C.S."/>
            <person name="Richardson P."/>
        </authorList>
    </citation>
    <scope>NUCLEOTIDE SEQUENCE [LARGE SCALE GENOMIC DNA]</scope>
    <source>
        <strain>BisB18</strain>
    </source>
</reference>
<protein>
    <recommendedName>
        <fullName evidence="1">Alanine--tRNA ligase</fullName>
        <ecNumber evidence="1">6.1.1.7</ecNumber>
    </recommendedName>
    <alternativeName>
        <fullName evidence="1">Alanyl-tRNA synthetase</fullName>
        <shortName evidence="1">AlaRS</shortName>
    </alternativeName>
</protein>
<accession>Q218Q3</accession>
<name>SYA_RHOPB</name>
<comment type="function">
    <text evidence="1">Catalyzes the attachment of alanine to tRNA(Ala) in a two-step reaction: alanine is first activated by ATP to form Ala-AMP and then transferred to the acceptor end of tRNA(Ala). Also edits incorrectly charged Ser-tRNA(Ala) and Gly-tRNA(Ala) via its editing domain.</text>
</comment>
<comment type="catalytic activity">
    <reaction evidence="1">
        <text>tRNA(Ala) + L-alanine + ATP = L-alanyl-tRNA(Ala) + AMP + diphosphate</text>
        <dbReference type="Rhea" id="RHEA:12540"/>
        <dbReference type="Rhea" id="RHEA-COMP:9657"/>
        <dbReference type="Rhea" id="RHEA-COMP:9923"/>
        <dbReference type="ChEBI" id="CHEBI:30616"/>
        <dbReference type="ChEBI" id="CHEBI:33019"/>
        <dbReference type="ChEBI" id="CHEBI:57972"/>
        <dbReference type="ChEBI" id="CHEBI:78442"/>
        <dbReference type="ChEBI" id="CHEBI:78497"/>
        <dbReference type="ChEBI" id="CHEBI:456215"/>
        <dbReference type="EC" id="6.1.1.7"/>
    </reaction>
</comment>
<comment type="cofactor">
    <cofactor evidence="1">
        <name>Zn(2+)</name>
        <dbReference type="ChEBI" id="CHEBI:29105"/>
    </cofactor>
    <text evidence="1">Binds 1 zinc ion per subunit.</text>
</comment>
<comment type="subcellular location">
    <subcellularLocation>
        <location evidence="1">Cytoplasm</location>
    </subcellularLocation>
</comment>
<comment type="domain">
    <text evidence="1">Consists of three domains; the N-terminal catalytic domain, the editing domain and the C-terminal C-Ala domain. The editing domain removes incorrectly charged amino acids, while the C-Ala domain, along with tRNA(Ala), serves as a bridge to cooperatively bring together the editing and aminoacylation centers thus stimulating deacylation of misacylated tRNAs.</text>
</comment>
<comment type="similarity">
    <text evidence="1">Belongs to the class-II aminoacyl-tRNA synthetase family.</text>
</comment>
<dbReference type="EC" id="6.1.1.7" evidence="1"/>
<dbReference type="EMBL" id="CP000301">
    <property type="protein sequence ID" value="ABD87133.1"/>
    <property type="molecule type" value="Genomic_DNA"/>
</dbReference>
<dbReference type="SMR" id="Q218Q3"/>
<dbReference type="STRING" id="316056.RPC_1571"/>
<dbReference type="KEGG" id="rpc:RPC_1571"/>
<dbReference type="eggNOG" id="COG0013">
    <property type="taxonomic scope" value="Bacteria"/>
</dbReference>
<dbReference type="HOGENOM" id="CLU_004485_1_1_5"/>
<dbReference type="OrthoDB" id="9803884at2"/>
<dbReference type="GO" id="GO:0005829">
    <property type="term" value="C:cytosol"/>
    <property type="evidence" value="ECO:0007669"/>
    <property type="project" value="TreeGrafter"/>
</dbReference>
<dbReference type="GO" id="GO:0004813">
    <property type="term" value="F:alanine-tRNA ligase activity"/>
    <property type="evidence" value="ECO:0007669"/>
    <property type="project" value="UniProtKB-UniRule"/>
</dbReference>
<dbReference type="GO" id="GO:0002161">
    <property type="term" value="F:aminoacyl-tRNA deacylase activity"/>
    <property type="evidence" value="ECO:0007669"/>
    <property type="project" value="TreeGrafter"/>
</dbReference>
<dbReference type="GO" id="GO:0005524">
    <property type="term" value="F:ATP binding"/>
    <property type="evidence" value="ECO:0007669"/>
    <property type="project" value="UniProtKB-UniRule"/>
</dbReference>
<dbReference type="GO" id="GO:0000049">
    <property type="term" value="F:tRNA binding"/>
    <property type="evidence" value="ECO:0007669"/>
    <property type="project" value="UniProtKB-KW"/>
</dbReference>
<dbReference type="GO" id="GO:0008270">
    <property type="term" value="F:zinc ion binding"/>
    <property type="evidence" value="ECO:0007669"/>
    <property type="project" value="UniProtKB-UniRule"/>
</dbReference>
<dbReference type="GO" id="GO:0006419">
    <property type="term" value="P:alanyl-tRNA aminoacylation"/>
    <property type="evidence" value="ECO:0007669"/>
    <property type="project" value="UniProtKB-UniRule"/>
</dbReference>
<dbReference type="GO" id="GO:0045892">
    <property type="term" value="P:negative regulation of DNA-templated transcription"/>
    <property type="evidence" value="ECO:0007669"/>
    <property type="project" value="TreeGrafter"/>
</dbReference>
<dbReference type="CDD" id="cd00673">
    <property type="entry name" value="AlaRS_core"/>
    <property type="match status" value="1"/>
</dbReference>
<dbReference type="FunFam" id="2.40.30.130:FF:000001">
    <property type="entry name" value="Alanine--tRNA ligase"/>
    <property type="match status" value="1"/>
</dbReference>
<dbReference type="FunFam" id="3.10.310.40:FF:000001">
    <property type="entry name" value="Alanine--tRNA ligase"/>
    <property type="match status" value="1"/>
</dbReference>
<dbReference type="FunFam" id="3.30.54.20:FF:000001">
    <property type="entry name" value="Alanine--tRNA ligase"/>
    <property type="match status" value="1"/>
</dbReference>
<dbReference type="FunFam" id="3.30.930.10:FF:000004">
    <property type="entry name" value="Alanine--tRNA ligase"/>
    <property type="match status" value="1"/>
</dbReference>
<dbReference type="FunFam" id="3.30.980.10:FF:000004">
    <property type="entry name" value="Alanine--tRNA ligase, cytoplasmic"/>
    <property type="match status" value="1"/>
</dbReference>
<dbReference type="Gene3D" id="2.40.30.130">
    <property type="match status" value="1"/>
</dbReference>
<dbReference type="Gene3D" id="3.10.310.40">
    <property type="match status" value="1"/>
</dbReference>
<dbReference type="Gene3D" id="3.30.54.20">
    <property type="match status" value="1"/>
</dbReference>
<dbReference type="Gene3D" id="6.10.250.550">
    <property type="match status" value="1"/>
</dbReference>
<dbReference type="Gene3D" id="3.30.930.10">
    <property type="entry name" value="Bira Bifunctional Protein, Domain 2"/>
    <property type="match status" value="1"/>
</dbReference>
<dbReference type="Gene3D" id="3.30.980.10">
    <property type="entry name" value="Threonyl-trna Synthetase, Chain A, domain 2"/>
    <property type="match status" value="1"/>
</dbReference>
<dbReference type="HAMAP" id="MF_00036_B">
    <property type="entry name" value="Ala_tRNA_synth_B"/>
    <property type="match status" value="1"/>
</dbReference>
<dbReference type="InterPro" id="IPR045864">
    <property type="entry name" value="aa-tRNA-synth_II/BPL/LPL"/>
</dbReference>
<dbReference type="InterPro" id="IPR002318">
    <property type="entry name" value="Ala-tRNA-lgiase_IIc"/>
</dbReference>
<dbReference type="InterPro" id="IPR018162">
    <property type="entry name" value="Ala-tRNA-ligase_IIc_anticod-bd"/>
</dbReference>
<dbReference type="InterPro" id="IPR018165">
    <property type="entry name" value="Ala-tRNA-synth_IIc_core"/>
</dbReference>
<dbReference type="InterPro" id="IPR018164">
    <property type="entry name" value="Ala-tRNA-synth_IIc_N"/>
</dbReference>
<dbReference type="InterPro" id="IPR050058">
    <property type="entry name" value="Ala-tRNA_ligase"/>
</dbReference>
<dbReference type="InterPro" id="IPR023033">
    <property type="entry name" value="Ala_tRNA_ligase_euk/bac"/>
</dbReference>
<dbReference type="InterPro" id="IPR003156">
    <property type="entry name" value="DHHA1_dom"/>
</dbReference>
<dbReference type="InterPro" id="IPR018163">
    <property type="entry name" value="Thr/Ala-tRNA-synth_IIc_edit"/>
</dbReference>
<dbReference type="InterPro" id="IPR009000">
    <property type="entry name" value="Transl_B-barrel_sf"/>
</dbReference>
<dbReference type="InterPro" id="IPR012947">
    <property type="entry name" value="tRNA_SAD"/>
</dbReference>
<dbReference type="NCBIfam" id="TIGR00344">
    <property type="entry name" value="alaS"/>
    <property type="match status" value="1"/>
</dbReference>
<dbReference type="PANTHER" id="PTHR11777:SF9">
    <property type="entry name" value="ALANINE--TRNA LIGASE, CYTOPLASMIC"/>
    <property type="match status" value="1"/>
</dbReference>
<dbReference type="PANTHER" id="PTHR11777">
    <property type="entry name" value="ALANYL-TRNA SYNTHETASE"/>
    <property type="match status" value="1"/>
</dbReference>
<dbReference type="Pfam" id="PF02272">
    <property type="entry name" value="DHHA1"/>
    <property type="match status" value="1"/>
</dbReference>
<dbReference type="Pfam" id="PF01411">
    <property type="entry name" value="tRNA-synt_2c"/>
    <property type="match status" value="1"/>
</dbReference>
<dbReference type="Pfam" id="PF07973">
    <property type="entry name" value="tRNA_SAD"/>
    <property type="match status" value="1"/>
</dbReference>
<dbReference type="PRINTS" id="PR00980">
    <property type="entry name" value="TRNASYNTHALA"/>
</dbReference>
<dbReference type="SMART" id="SM00863">
    <property type="entry name" value="tRNA_SAD"/>
    <property type="match status" value="1"/>
</dbReference>
<dbReference type="SUPFAM" id="SSF55681">
    <property type="entry name" value="Class II aaRS and biotin synthetases"/>
    <property type="match status" value="1"/>
</dbReference>
<dbReference type="SUPFAM" id="SSF101353">
    <property type="entry name" value="Putative anticodon-binding domain of alanyl-tRNA synthetase (AlaRS)"/>
    <property type="match status" value="1"/>
</dbReference>
<dbReference type="SUPFAM" id="SSF55186">
    <property type="entry name" value="ThrRS/AlaRS common domain"/>
    <property type="match status" value="1"/>
</dbReference>
<dbReference type="SUPFAM" id="SSF50447">
    <property type="entry name" value="Translation proteins"/>
    <property type="match status" value="1"/>
</dbReference>
<dbReference type="PROSITE" id="PS50860">
    <property type="entry name" value="AA_TRNA_LIGASE_II_ALA"/>
    <property type="match status" value="1"/>
</dbReference>
<gene>
    <name evidence="1" type="primary">alaS</name>
    <name type="ordered locus">RPC_1571</name>
</gene>
<proteinExistence type="inferred from homology"/>
<evidence type="ECO:0000255" key="1">
    <source>
        <dbReference type="HAMAP-Rule" id="MF_00036"/>
    </source>
</evidence>
<feature type="chain" id="PRO_0000347758" description="Alanine--tRNA ligase">
    <location>
        <begin position="1"/>
        <end position="890"/>
    </location>
</feature>
<feature type="binding site" evidence="1">
    <location>
        <position position="564"/>
    </location>
    <ligand>
        <name>Zn(2+)</name>
        <dbReference type="ChEBI" id="CHEBI:29105"/>
    </ligand>
</feature>
<feature type="binding site" evidence="1">
    <location>
        <position position="568"/>
    </location>
    <ligand>
        <name>Zn(2+)</name>
        <dbReference type="ChEBI" id="CHEBI:29105"/>
    </ligand>
</feature>
<feature type="binding site" evidence="1">
    <location>
        <position position="677"/>
    </location>
    <ligand>
        <name>Zn(2+)</name>
        <dbReference type="ChEBI" id="CHEBI:29105"/>
    </ligand>
</feature>
<feature type="binding site" evidence="1">
    <location>
        <position position="681"/>
    </location>
    <ligand>
        <name>Zn(2+)</name>
        <dbReference type="ChEBI" id="CHEBI:29105"/>
    </ligand>
</feature>
<sequence length="890" mass="96426">MSGVNEIRSAFLNYFGKDGHEIVPSSPLVPRNDPTLMFTNAGMVQFKNVFTGVEKRANHRATTSQKCVRAGGKHNDLDNVGYTARHHTFFEMLGNFSFGDYFKDHAIELAWNLITKEFGLPKERLLVTVFSEDDEAFALWKKIAGLPDSKIIRIPTSDNFWQMGDTGPCGPCSEIFFDHGDHIPGGPPGSPEEDGDRFIEIWNLVFMQFDQIAPGQRNPLPKPSIDTGMGLERIAAVLQGKHDNYDIDLFQALIRAIAELTGADPKGEHKASLRVIADHLRASSFLIADGVLPSNEGRGYVLRRIMRRAMRHGQLLGATEPLMWRLVWALVREMGQAYPELVRAEPMIEETLRLEETRFRKTLDRGLIILDEKSSTLKKGDMFDGETAFTLYDTYGFPLDLTQDALRNRGISVDIASFTDAMDRQRAKARASWAGSGDTATETVWFGLREQLGATEFLGYETETAEGVVAALVKDGQKVDQLKVGEAGAIVLNQTPFYAESGGQVGDTGVMTGEGVRFRVTETQKKAHDLFVHLGTVEQGTLTPDTALLLEVDHTRRSSIRANHSATHLLHEALRQVLGDHIAQKGSLVAEDRLRFDFVHQKPISADELRRVEDIANEVVLENDEVTTRLMAVDDAREAGARALFGEKYGDEVRVVTMGKSARQHGSNALGWSVELCGGTHVRRTGDIGLISITGESAVASGVRRIEALTGRFARQSANAAIDTAKATAAELRTSVDDMPARVAALMDERKKLERELAEARKKLAMGGGGAAAANGEAGVREVGGVKLLARAVEGIEIKDLKSLVDQGKKQLGSGVIALVATSADGKGSIVVGVTPDLVARFSAVDLVRKASEVLGGKGGGGKPDMAQAGGPDGSKAQAALDAIAEAIGG</sequence>
<keyword id="KW-0030">Aminoacyl-tRNA synthetase</keyword>
<keyword id="KW-0067">ATP-binding</keyword>
<keyword id="KW-0963">Cytoplasm</keyword>
<keyword id="KW-0436">Ligase</keyword>
<keyword id="KW-0479">Metal-binding</keyword>
<keyword id="KW-0547">Nucleotide-binding</keyword>
<keyword id="KW-0648">Protein biosynthesis</keyword>
<keyword id="KW-0694">RNA-binding</keyword>
<keyword id="KW-0820">tRNA-binding</keyword>
<keyword id="KW-0862">Zinc</keyword>